<accession>P40352</accession>
<accession>D6VWK8</accession>
<reference key="1">
    <citation type="journal article" date="1994" name="Biochem. Biophys. Res. Commun.">
        <title>A possible yeast homolog of human active-gene-repairing helicase ERCC6+.</title>
        <authorList>
            <person name="Huang M.-E."/>
            <person name="Chuat J.-C."/>
            <person name="Galibert F."/>
        </authorList>
    </citation>
    <scope>NUCLEOTIDE SEQUENCE [GENOMIC DNA]</scope>
    <source>
        <strain>ATCC 204508 / S288c</strain>
    </source>
</reference>
<reference key="2">
    <citation type="journal article" date="1994" name="EMBO J.">
        <title>RAD26, the functional S. cerevisiae homolog of the Cockayne syndrome B gene ERCC6.</title>
        <authorList>
            <person name="van Gool A.J."/>
            <person name="Verhage R."/>
            <person name="Swagemakers S.M.A."/>
            <person name="van de Putte P."/>
            <person name="Brouwer J."/>
            <person name="Troelstra C."/>
            <person name="Bootsma D."/>
            <person name="Hoeijmakers J.H.J."/>
        </authorList>
    </citation>
    <scope>NUCLEOTIDE SEQUENCE [GENOMIC DNA]</scope>
</reference>
<reference key="3">
    <citation type="journal article" date="1996" name="EMBO J.">
        <title>Complete nucleotide sequence of Saccharomyces cerevisiae chromosome X.</title>
        <authorList>
            <person name="Galibert F."/>
            <person name="Alexandraki D."/>
            <person name="Baur A."/>
            <person name="Boles E."/>
            <person name="Chalwatzis N."/>
            <person name="Chuat J.-C."/>
            <person name="Coster F."/>
            <person name="Cziepluch C."/>
            <person name="de Haan M."/>
            <person name="Domdey H."/>
            <person name="Durand P."/>
            <person name="Entian K.-D."/>
            <person name="Gatius M."/>
            <person name="Goffeau A."/>
            <person name="Grivell L.A."/>
            <person name="Hennemann A."/>
            <person name="Herbert C.J."/>
            <person name="Heumann K."/>
            <person name="Hilger F."/>
            <person name="Hollenberg C.P."/>
            <person name="Huang M.-E."/>
            <person name="Jacq C."/>
            <person name="Jauniaux J.-C."/>
            <person name="Katsoulou C."/>
            <person name="Kirchrath L."/>
            <person name="Kleine K."/>
            <person name="Kordes E."/>
            <person name="Koetter P."/>
            <person name="Liebl S."/>
            <person name="Louis E.J."/>
            <person name="Manus V."/>
            <person name="Mewes H.-W."/>
            <person name="Miosga T."/>
            <person name="Obermaier B."/>
            <person name="Perea J."/>
            <person name="Pohl T.M."/>
            <person name="Portetelle D."/>
            <person name="Pujol A."/>
            <person name="Purnelle B."/>
            <person name="Ramezani Rad M."/>
            <person name="Rasmussen S.W."/>
            <person name="Rose M."/>
            <person name="Rossau R."/>
            <person name="Schaaff-Gerstenschlaeger I."/>
            <person name="Smits P.H.M."/>
            <person name="Scarcez T."/>
            <person name="Soriano N."/>
            <person name="To Van D."/>
            <person name="Tzermia M."/>
            <person name="Van Broekhoven A."/>
            <person name="Vandenbol M."/>
            <person name="Wedler H."/>
            <person name="von Wettstein D."/>
            <person name="Wambutt R."/>
            <person name="Zagulski M."/>
            <person name="Zollner A."/>
            <person name="Karpfinger-Hartl L."/>
        </authorList>
    </citation>
    <scope>NUCLEOTIDE SEQUENCE [LARGE SCALE GENOMIC DNA]</scope>
    <source>
        <strain>ATCC 204508 / S288c</strain>
    </source>
</reference>
<reference key="4">
    <citation type="journal article" date="2014" name="G3 (Bethesda)">
        <title>The reference genome sequence of Saccharomyces cerevisiae: Then and now.</title>
        <authorList>
            <person name="Engel S.R."/>
            <person name="Dietrich F.S."/>
            <person name="Fisk D.G."/>
            <person name="Binkley G."/>
            <person name="Balakrishnan R."/>
            <person name="Costanzo M.C."/>
            <person name="Dwight S.S."/>
            <person name="Hitz B.C."/>
            <person name="Karra K."/>
            <person name="Nash R.S."/>
            <person name="Weng S."/>
            <person name="Wong E.D."/>
            <person name="Lloyd P."/>
            <person name="Skrzypek M.S."/>
            <person name="Miyasato S.R."/>
            <person name="Simison M."/>
            <person name="Cherry J.M."/>
        </authorList>
    </citation>
    <scope>GENOME REANNOTATION</scope>
    <source>
        <strain>ATCC 204508 / S288c</strain>
    </source>
</reference>
<reference key="5">
    <citation type="journal article" date="2008" name="Mol. Cell. Proteomics">
        <title>A multidimensional chromatography technology for in-depth phosphoproteome analysis.</title>
        <authorList>
            <person name="Albuquerque C.P."/>
            <person name="Smolka M.B."/>
            <person name="Payne S.H."/>
            <person name="Bafna V."/>
            <person name="Eng J."/>
            <person name="Zhou H."/>
        </authorList>
    </citation>
    <scope>IDENTIFICATION BY MASS SPECTROMETRY [LARGE SCALE ANALYSIS]</scope>
</reference>
<reference key="6">
    <citation type="journal article" date="2009" name="Science">
        <title>Global analysis of Cdk1 substrate phosphorylation sites provides insights into evolution.</title>
        <authorList>
            <person name="Holt L.J."/>
            <person name="Tuch B.B."/>
            <person name="Villen J."/>
            <person name="Johnson A.D."/>
            <person name="Gygi S.P."/>
            <person name="Morgan D.O."/>
        </authorList>
    </citation>
    <scope>PHOSPHORYLATION [LARGE SCALE ANALYSIS] AT SER-30</scope>
    <scope>IDENTIFICATION BY MASS SPECTROMETRY [LARGE SCALE ANALYSIS]</scope>
</reference>
<protein>
    <recommendedName>
        <fullName>DNA repair and recombination protein RAD26</fullName>
        <ecNumber>3.6.4.12</ecNumber>
    </recommendedName>
    <alternativeName>
        <fullName>ATP-dependent helicase RAD26</fullName>
    </alternativeName>
</protein>
<sequence>MEDKEQQDNAKLENNESLKDLGVNVLSQSSLEEKIANDVTNFSNLQSLQQEETRLERSKTALQRYVNKKNHLTRKLNNTTRISVKQNLRDQIKNLQSDDIERVLKDIDDIQSRIKELKEQVDQGAENKGSKEGLQRPGETEKEFLIRTGKITAFGHKAGFSLDTANREYAKNDEQKDEDFEMATEQMVENLTDEDDNLSDQDYQMSGKESEDDEEEENDDKILKELEDLRFRGQPGEAKDDGDELYYQERLKKWVKQRSCGSQRSSDLPEWRRPHPNIPDAKLNSQFKIPGEIYSLLFNYQKTCVQWLYELYQQNCGGIIGDEMGLGKTIQVIAFIAALHHSGLLTGPVLIVCPATVMKQWCNEFQHWWPPLRTVILHSMGSGMASDQKFKMDENDLENLIMNSKPSDFSYEDWKNSTRTKKALESSYHLDKLIDKVVTDGHILITTYVGLRIHSDKLLKVKWQYAVLDEGHKIRNPDSEISLTCKKLKTHNRIILSGTPIQNNLTELWSLFDFIFPGKLGTLPVFQQQFVIPINIGGYANATNIQVQTGYKCAVALRDLISPYLLRRVKADVAKDLPQKKEMVLFCKLTKYQRSKYLEFLHSSDLNQIQNGKRNVLFGIDILRKICNHPDLLDRDTKRHNPDYGDPKRSGKMQVVKQLLLLWHKQGYKALLFTQSRQMLDILEEFISTKDPDLSHLNYLRMDGTTNIKGRQSLVDRFNNESFDVFLLTTRVGGLGVNLTGANRIIIFDPDWNPSTDMQARERAWRIGQKREVSIYRLMVGGSIEEKIYHRQIFKQFLTNRILTDPKQKRFFKIHELHDLFSLGGENGYSTEELNEEVQKHTENLKNSKSEESDDFEQLVNLSGVSKLESFYNGKEKKENSKTEDDRLIEGLLGGESNLETVMSHDSVVNSHAGSSSSNIITKEASRVAIEAVNALRKSRKKITKQYEIGTPTWTGRFGKAGKIRKRDPLKNKLTGSAAILGNITKSQKEASKEARQENYDDGITFARSKEINSNTKTLENIRAYLQKQNNFFSSSVSILNSIGVSLSDKEDVIKVRALLKTIAQFDKERKGWVLDEEFRNNNAS</sequence>
<name>RAD26_YEAST</name>
<evidence type="ECO:0000255" key="1">
    <source>
        <dbReference type="PROSITE-ProRule" id="PRU00541"/>
    </source>
</evidence>
<evidence type="ECO:0000255" key="2">
    <source>
        <dbReference type="PROSITE-ProRule" id="PRU00542"/>
    </source>
</evidence>
<evidence type="ECO:0000256" key="3">
    <source>
        <dbReference type="SAM" id="MobiDB-lite"/>
    </source>
</evidence>
<evidence type="ECO:0000305" key="4"/>
<evidence type="ECO:0007744" key="5">
    <source>
    </source>
</evidence>
<evidence type="ECO:0007829" key="6">
    <source>
        <dbReference type="PDB" id="8TVY"/>
    </source>
</evidence>
<comment type="function">
    <text>May be involved in the preferential repair of active genes.</text>
</comment>
<comment type="catalytic activity">
    <reaction>
        <text>ATP + H2O = ADP + phosphate + H(+)</text>
        <dbReference type="Rhea" id="RHEA:13065"/>
        <dbReference type="ChEBI" id="CHEBI:15377"/>
        <dbReference type="ChEBI" id="CHEBI:15378"/>
        <dbReference type="ChEBI" id="CHEBI:30616"/>
        <dbReference type="ChEBI" id="CHEBI:43474"/>
        <dbReference type="ChEBI" id="CHEBI:456216"/>
        <dbReference type="EC" id="3.6.4.12"/>
    </reaction>
</comment>
<comment type="interaction">
    <interactant intactId="EBI-14687">
        <id>P40352</id>
    </interactant>
    <interactant intactId="EBI-26695">
        <id>P35732</id>
        <label>DEF1</label>
    </interactant>
    <organismsDiffer>false</organismsDiffer>
    <experiments>2</experiments>
</comment>
<comment type="subcellular location">
    <subcellularLocation>
        <location evidence="4">Nucleus</location>
    </subcellularLocation>
</comment>
<comment type="similarity">
    <text evidence="4">Belongs to the SNF2/RAD54 helicase family.</text>
</comment>
<keyword id="KW-0002">3D-structure</keyword>
<keyword id="KW-0067">ATP-binding</keyword>
<keyword id="KW-0227">DNA damage</keyword>
<keyword id="KW-0234">DNA repair</keyword>
<keyword id="KW-0238">DNA-binding</keyword>
<keyword id="KW-0347">Helicase</keyword>
<keyword id="KW-0378">Hydrolase</keyword>
<keyword id="KW-0547">Nucleotide-binding</keyword>
<keyword id="KW-0539">Nucleus</keyword>
<keyword id="KW-0597">Phosphoprotein</keyword>
<keyword id="KW-1185">Reference proteome</keyword>
<organism>
    <name type="scientific">Saccharomyces cerevisiae (strain ATCC 204508 / S288c)</name>
    <name type="common">Baker's yeast</name>
    <dbReference type="NCBI Taxonomy" id="559292"/>
    <lineage>
        <taxon>Eukaryota</taxon>
        <taxon>Fungi</taxon>
        <taxon>Dikarya</taxon>
        <taxon>Ascomycota</taxon>
        <taxon>Saccharomycotina</taxon>
        <taxon>Saccharomycetes</taxon>
        <taxon>Saccharomycetales</taxon>
        <taxon>Saccharomycetaceae</taxon>
        <taxon>Saccharomyces</taxon>
    </lineage>
</organism>
<proteinExistence type="evidence at protein level"/>
<dbReference type="EC" id="3.6.4.12"/>
<dbReference type="EMBL" id="L26910">
    <property type="protein sequence ID" value="AAA34655.1"/>
    <property type="molecule type" value="Genomic_DNA"/>
</dbReference>
<dbReference type="EMBL" id="X81635">
    <property type="protein sequence ID" value="CAA57290.1"/>
    <property type="molecule type" value="Genomic_DNA"/>
</dbReference>
<dbReference type="EMBL" id="Z49535">
    <property type="protein sequence ID" value="CAA89562.1"/>
    <property type="molecule type" value="Genomic_DNA"/>
</dbReference>
<dbReference type="EMBL" id="BK006943">
    <property type="protein sequence ID" value="DAA08824.1"/>
    <property type="molecule type" value="Genomic_DNA"/>
</dbReference>
<dbReference type="PIR" id="JC2227">
    <property type="entry name" value="JC2227"/>
</dbReference>
<dbReference type="RefSeq" id="NP_012569.1">
    <property type="nucleotide sequence ID" value="NM_001181693.1"/>
</dbReference>
<dbReference type="PDB" id="5VVR">
    <property type="method" value="EM"/>
    <property type="resolution" value="5.80 A"/>
    <property type="chains" value="M=1-1085"/>
</dbReference>
<dbReference type="PDB" id="8TVY">
    <property type="method" value="EM"/>
    <property type="resolution" value="3.10 A"/>
    <property type="chains" value="M=1-1085"/>
</dbReference>
<dbReference type="PDBsum" id="5VVR"/>
<dbReference type="PDBsum" id="8TVY"/>
<dbReference type="EMDB" id="EMD-8735"/>
<dbReference type="SMR" id="P40352"/>
<dbReference type="BioGRID" id="33788">
    <property type="interactions" value="171"/>
</dbReference>
<dbReference type="ComplexPortal" id="CPX-1189">
    <property type="entry name" value="RAD26-DEF1 stalled RNAPII response complex"/>
</dbReference>
<dbReference type="DIP" id="DIP-3008N"/>
<dbReference type="FunCoup" id="P40352">
    <property type="interactions" value="762"/>
</dbReference>
<dbReference type="IntAct" id="P40352">
    <property type="interactions" value="54"/>
</dbReference>
<dbReference type="MINT" id="P40352"/>
<dbReference type="STRING" id="4932.YJR035W"/>
<dbReference type="iPTMnet" id="P40352"/>
<dbReference type="PaxDb" id="4932-YJR035W"/>
<dbReference type="PeptideAtlas" id="P40352"/>
<dbReference type="EnsemblFungi" id="YJR035W_mRNA">
    <property type="protein sequence ID" value="YJR035W"/>
    <property type="gene ID" value="YJR035W"/>
</dbReference>
<dbReference type="GeneID" id="853492"/>
<dbReference type="KEGG" id="sce:YJR035W"/>
<dbReference type="AGR" id="SGD:S000003796"/>
<dbReference type="SGD" id="S000003796">
    <property type="gene designation" value="RAD26"/>
</dbReference>
<dbReference type="VEuPathDB" id="FungiDB:YJR035W"/>
<dbReference type="eggNOG" id="KOG0387">
    <property type="taxonomic scope" value="Eukaryota"/>
</dbReference>
<dbReference type="GeneTree" id="ENSGT00940000158057"/>
<dbReference type="HOGENOM" id="CLU_000315_7_0_1"/>
<dbReference type="InParanoid" id="P40352"/>
<dbReference type="OMA" id="NEFHQWW"/>
<dbReference type="OrthoDB" id="413460at2759"/>
<dbReference type="BioCyc" id="YEAST:G3O-31672-MONOMER"/>
<dbReference type="Reactome" id="R-SCE-6781823">
    <property type="pathway name" value="Formation of TC-NER Pre-Incision Complex"/>
</dbReference>
<dbReference type="Reactome" id="R-SCE-6782135">
    <property type="pathway name" value="Dual incision in TC-NER"/>
</dbReference>
<dbReference type="Reactome" id="R-SCE-6782210">
    <property type="pathway name" value="Gap-filling DNA repair synthesis and ligation in TC-NER"/>
</dbReference>
<dbReference type="BioGRID-ORCS" id="853492">
    <property type="hits" value="0 hits in 10 CRISPR screens"/>
</dbReference>
<dbReference type="PRO" id="PR:P40352"/>
<dbReference type="Proteomes" id="UP000002311">
    <property type="component" value="Chromosome X"/>
</dbReference>
<dbReference type="RNAct" id="P40352">
    <property type="molecule type" value="protein"/>
</dbReference>
<dbReference type="GO" id="GO:0000785">
    <property type="term" value="C:chromatin"/>
    <property type="evidence" value="ECO:0000314"/>
    <property type="project" value="ComplexPortal"/>
</dbReference>
<dbReference type="GO" id="GO:0005737">
    <property type="term" value="C:cytoplasm"/>
    <property type="evidence" value="ECO:0007005"/>
    <property type="project" value="SGD"/>
</dbReference>
<dbReference type="GO" id="GO:0005634">
    <property type="term" value="C:nucleus"/>
    <property type="evidence" value="ECO:0007005"/>
    <property type="project" value="SGD"/>
</dbReference>
<dbReference type="GO" id="GO:0005524">
    <property type="term" value="F:ATP binding"/>
    <property type="evidence" value="ECO:0007669"/>
    <property type="project" value="UniProtKB-KW"/>
</dbReference>
<dbReference type="GO" id="GO:0016887">
    <property type="term" value="F:ATP hydrolysis activity"/>
    <property type="evidence" value="ECO:0007669"/>
    <property type="project" value="RHEA"/>
</dbReference>
<dbReference type="GO" id="GO:0008094">
    <property type="term" value="F:ATP-dependent activity, acting on DNA"/>
    <property type="evidence" value="ECO:0000314"/>
    <property type="project" value="SGD"/>
</dbReference>
<dbReference type="GO" id="GO:0140658">
    <property type="term" value="F:ATP-dependent chromatin remodeler activity"/>
    <property type="evidence" value="ECO:0000318"/>
    <property type="project" value="GO_Central"/>
</dbReference>
<dbReference type="GO" id="GO:0003677">
    <property type="term" value="F:DNA binding"/>
    <property type="evidence" value="ECO:0007669"/>
    <property type="project" value="UniProtKB-KW"/>
</dbReference>
<dbReference type="GO" id="GO:0004386">
    <property type="term" value="F:helicase activity"/>
    <property type="evidence" value="ECO:0007669"/>
    <property type="project" value="UniProtKB-KW"/>
</dbReference>
<dbReference type="GO" id="GO:0006974">
    <property type="term" value="P:DNA damage response"/>
    <property type="evidence" value="ECO:0000314"/>
    <property type="project" value="ComplexPortal"/>
</dbReference>
<dbReference type="GO" id="GO:0006289">
    <property type="term" value="P:nucleotide-excision repair"/>
    <property type="evidence" value="ECO:0000316"/>
    <property type="project" value="SGD"/>
</dbReference>
<dbReference type="GO" id="GO:0061635">
    <property type="term" value="P:regulation of protein complex stability"/>
    <property type="evidence" value="ECO:0000314"/>
    <property type="project" value="ComplexPortal"/>
</dbReference>
<dbReference type="GO" id="GO:0006357">
    <property type="term" value="P:regulation of transcription by RNA polymerase II"/>
    <property type="evidence" value="ECO:0000315"/>
    <property type="project" value="SGD"/>
</dbReference>
<dbReference type="GO" id="GO:0006283">
    <property type="term" value="P:transcription-coupled nucleotide-excision repair"/>
    <property type="evidence" value="ECO:0000315"/>
    <property type="project" value="SGD"/>
</dbReference>
<dbReference type="CDD" id="cd18000">
    <property type="entry name" value="DEXHc_ERCC6"/>
    <property type="match status" value="1"/>
</dbReference>
<dbReference type="CDD" id="cd18793">
    <property type="entry name" value="SF2_C_SNF"/>
    <property type="match status" value="1"/>
</dbReference>
<dbReference type="FunFam" id="3.40.50.300:FF:000863">
    <property type="entry name" value="DNA excision repair protein ERCC-6"/>
    <property type="match status" value="1"/>
</dbReference>
<dbReference type="FunFam" id="3.40.50.10810:FF:000039">
    <property type="entry name" value="DNA repair protein Rhp26/Rad26"/>
    <property type="match status" value="1"/>
</dbReference>
<dbReference type="Gene3D" id="3.40.50.300">
    <property type="entry name" value="P-loop containing nucleotide triphosphate hydrolases"/>
    <property type="match status" value="1"/>
</dbReference>
<dbReference type="Gene3D" id="3.40.50.10810">
    <property type="entry name" value="Tandem AAA-ATPase domain"/>
    <property type="match status" value="1"/>
</dbReference>
<dbReference type="InterPro" id="IPR014001">
    <property type="entry name" value="Helicase_ATP-bd"/>
</dbReference>
<dbReference type="InterPro" id="IPR001650">
    <property type="entry name" value="Helicase_C-like"/>
</dbReference>
<dbReference type="InterPro" id="IPR027417">
    <property type="entry name" value="P-loop_NTPase"/>
</dbReference>
<dbReference type="InterPro" id="IPR038718">
    <property type="entry name" value="SNF2-like_sf"/>
</dbReference>
<dbReference type="InterPro" id="IPR049730">
    <property type="entry name" value="SNF2/RAD54-like_C"/>
</dbReference>
<dbReference type="InterPro" id="IPR000330">
    <property type="entry name" value="SNF2_N"/>
</dbReference>
<dbReference type="InterPro" id="IPR050496">
    <property type="entry name" value="SNF2_RAD54_helicase_repair"/>
</dbReference>
<dbReference type="PANTHER" id="PTHR45629:SF7">
    <property type="entry name" value="DNA EXCISION REPAIR PROTEIN ERCC-6-RELATED"/>
    <property type="match status" value="1"/>
</dbReference>
<dbReference type="PANTHER" id="PTHR45629">
    <property type="entry name" value="SNF2/RAD54 FAMILY MEMBER"/>
    <property type="match status" value="1"/>
</dbReference>
<dbReference type="Pfam" id="PF00271">
    <property type="entry name" value="Helicase_C"/>
    <property type="match status" value="1"/>
</dbReference>
<dbReference type="Pfam" id="PF00176">
    <property type="entry name" value="SNF2-rel_dom"/>
    <property type="match status" value="1"/>
</dbReference>
<dbReference type="SMART" id="SM00487">
    <property type="entry name" value="DEXDc"/>
    <property type="match status" value="1"/>
</dbReference>
<dbReference type="SMART" id="SM00490">
    <property type="entry name" value="HELICc"/>
    <property type="match status" value="1"/>
</dbReference>
<dbReference type="SUPFAM" id="SSF52540">
    <property type="entry name" value="P-loop containing nucleoside triphosphate hydrolases"/>
    <property type="match status" value="2"/>
</dbReference>
<dbReference type="PROSITE" id="PS51192">
    <property type="entry name" value="HELICASE_ATP_BIND_1"/>
    <property type="match status" value="1"/>
</dbReference>
<dbReference type="PROSITE" id="PS51194">
    <property type="entry name" value="HELICASE_CTER"/>
    <property type="match status" value="1"/>
</dbReference>
<gene>
    <name type="primary">RAD26</name>
    <name type="synonym">GTA1085</name>
    <name type="ordered locus">YJR035W</name>
    <name type="ORF">J1606</name>
</gene>
<feature type="chain" id="PRO_0000074336" description="DNA repair and recombination protein RAD26">
    <location>
        <begin position="1"/>
        <end position="1085"/>
    </location>
</feature>
<feature type="domain" description="Helicase ATP-binding" evidence="1">
    <location>
        <begin position="309"/>
        <end position="518"/>
    </location>
</feature>
<feature type="domain" description="Helicase C-terminal" evidence="2">
    <location>
        <begin position="655"/>
        <end position="818"/>
    </location>
</feature>
<feature type="region of interest" description="Disordered" evidence="3">
    <location>
        <begin position="118"/>
        <end position="141"/>
    </location>
</feature>
<feature type="region of interest" description="Disordered" evidence="3">
    <location>
        <begin position="190"/>
        <end position="219"/>
    </location>
</feature>
<feature type="short sequence motif" description="DEGH box">
    <location>
        <begin position="469"/>
        <end position="472"/>
    </location>
</feature>
<feature type="compositionally biased region" description="Basic and acidic residues" evidence="3">
    <location>
        <begin position="128"/>
        <end position="141"/>
    </location>
</feature>
<feature type="compositionally biased region" description="Acidic residues" evidence="3">
    <location>
        <begin position="210"/>
        <end position="219"/>
    </location>
</feature>
<feature type="binding site" evidence="1">
    <location>
        <begin position="322"/>
        <end position="329"/>
    </location>
    <ligand>
        <name>ATP</name>
        <dbReference type="ChEBI" id="CHEBI:30616"/>
    </ligand>
</feature>
<feature type="modified residue" description="Phosphoserine" evidence="5">
    <location>
        <position position="30"/>
    </location>
</feature>
<feature type="sequence conflict" description="In Ref. 2; CAA57290." evidence="4" ref="2">
    <original>Q</original>
    <variation>H</variation>
    <location>
        <position position="366"/>
    </location>
</feature>
<feature type="sequence conflict" description="In Ref. 2; CAA57290." evidence="4" ref="2">
    <original>K</original>
    <variation>E</variation>
    <location>
        <position position="963"/>
    </location>
</feature>
<feature type="helix" evidence="6">
    <location>
        <begin position="217"/>
        <end position="225"/>
    </location>
</feature>
<feature type="helix" evidence="6">
    <location>
        <begin position="229"/>
        <end position="231"/>
    </location>
</feature>
<feature type="helix" evidence="6">
    <location>
        <begin position="234"/>
        <end position="249"/>
    </location>
</feature>
<feature type="helix" evidence="6">
    <location>
        <begin position="254"/>
        <end position="256"/>
    </location>
</feature>
<feature type="turn" evidence="6">
    <location>
        <begin position="263"/>
        <end position="265"/>
    </location>
</feature>
<feature type="helix" evidence="6">
    <location>
        <begin position="269"/>
        <end position="272"/>
    </location>
</feature>
<feature type="strand" evidence="6">
    <location>
        <begin position="275"/>
        <end position="277"/>
    </location>
</feature>
<feature type="turn" evidence="6">
    <location>
        <begin position="280"/>
        <end position="282"/>
    </location>
</feature>
<feature type="strand" evidence="6">
    <location>
        <begin position="287"/>
        <end position="289"/>
    </location>
</feature>
<feature type="helix" evidence="6">
    <location>
        <begin position="292"/>
        <end position="296"/>
    </location>
</feature>
<feature type="helix" evidence="6">
    <location>
        <begin position="301"/>
        <end position="314"/>
    </location>
</feature>
<feature type="strand" evidence="6">
    <location>
        <begin position="316"/>
        <end position="320"/>
    </location>
</feature>
<feature type="turn" evidence="6">
    <location>
        <begin position="330"/>
        <end position="332"/>
    </location>
</feature>
<feature type="helix" evidence="6">
    <location>
        <begin position="333"/>
        <end position="341"/>
    </location>
</feature>
<feature type="strand" evidence="6">
    <location>
        <begin position="349"/>
        <end position="352"/>
    </location>
</feature>
<feature type="helix" evidence="6">
    <location>
        <begin position="355"/>
        <end position="368"/>
    </location>
</feature>
<feature type="strand" evidence="6">
    <location>
        <begin position="376"/>
        <end position="379"/>
    </location>
</feature>
<feature type="helix" evidence="6">
    <location>
        <begin position="383"/>
        <end position="385"/>
    </location>
</feature>
<feature type="strand" evidence="6">
    <location>
        <begin position="443"/>
        <end position="446"/>
    </location>
</feature>
<feature type="helix" evidence="6">
    <location>
        <begin position="448"/>
        <end position="453"/>
    </location>
</feature>
<feature type="helix" evidence="6">
    <location>
        <begin position="457"/>
        <end position="460"/>
    </location>
</feature>
<feature type="strand" evidence="6">
    <location>
        <begin position="464"/>
        <end position="469"/>
    </location>
</feature>
<feature type="helix" evidence="6">
    <location>
        <begin position="471"/>
        <end position="474"/>
    </location>
</feature>
<feature type="helix" evidence="6">
    <location>
        <begin position="480"/>
        <end position="487"/>
    </location>
</feature>
<feature type="strand" evidence="6">
    <location>
        <begin position="491"/>
        <end position="495"/>
    </location>
</feature>
<feature type="strand" evidence="6">
    <location>
        <begin position="498"/>
        <end position="500"/>
    </location>
</feature>
<feature type="helix" evidence="6">
    <location>
        <begin position="505"/>
        <end position="515"/>
    </location>
</feature>
<feature type="helix" evidence="6">
    <location>
        <begin position="523"/>
        <end position="528"/>
    </location>
</feature>
<feature type="helix" evidence="6">
    <location>
        <begin position="534"/>
        <end position="536"/>
    </location>
</feature>
<feature type="turn" evidence="6">
    <location>
        <begin position="538"/>
        <end position="542"/>
    </location>
</feature>
<feature type="strand" evidence="6">
    <location>
        <begin position="545"/>
        <end position="549"/>
    </location>
</feature>
<feature type="helix" evidence="6">
    <location>
        <begin position="554"/>
        <end position="561"/>
    </location>
</feature>
<feature type="helix" evidence="6">
    <location>
        <begin position="562"/>
        <end position="564"/>
    </location>
</feature>
<feature type="helix" evidence="6">
    <location>
        <begin position="570"/>
        <end position="573"/>
    </location>
</feature>
<feature type="helix" evidence="6">
    <location>
        <begin position="591"/>
        <end position="604"/>
    </location>
</feature>
<feature type="strand" evidence="6">
    <location>
        <begin position="606"/>
        <end position="609"/>
    </location>
</feature>
<feature type="strand" evidence="6">
    <location>
        <begin position="612"/>
        <end position="616"/>
    </location>
</feature>
<feature type="helix" evidence="6">
    <location>
        <begin position="619"/>
        <end position="628"/>
    </location>
</feature>
<feature type="turn" evidence="6">
    <location>
        <begin position="638"/>
        <end position="643"/>
    </location>
</feature>
<feature type="helix" evidence="6">
    <location>
        <begin position="647"/>
        <end position="649"/>
    </location>
</feature>
<feature type="helix" evidence="6">
    <location>
        <begin position="651"/>
        <end position="665"/>
    </location>
</feature>
<feature type="strand" evidence="6">
    <location>
        <begin position="670"/>
        <end position="676"/>
    </location>
</feature>
<feature type="helix" evidence="6">
    <location>
        <begin position="677"/>
        <end position="689"/>
    </location>
</feature>
<feature type="helix" evidence="6">
    <location>
        <begin position="692"/>
        <end position="695"/>
    </location>
</feature>
<feature type="helix" evidence="6">
    <location>
        <begin position="708"/>
        <end position="719"/>
    </location>
</feature>
<feature type="strand" evidence="6">
    <location>
        <begin position="724"/>
        <end position="733"/>
    </location>
</feature>
<feature type="strand" evidence="6">
    <location>
        <begin position="744"/>
        <end position="747"/>
    </location>
</feature>
<feature type="helix" evidence="6">
    <location>
        <begin position="754"/>
        <end position="762"/>
    </location>
</feature>
<feature type="strand" evidence="6">
    <location>
        <begin position="774"/>
        <end position="777"/>
    </location>
</feature>
<feature type="helix" evidence="6">
    <location>
        <begin position="784"/>
        <end position="804"/>
    </location>
</feature>
<feature type="helix" evidence="6">
    <location>
        <begin position="814"/>
        <end position="820"/>
    </location>
</feature>